<feature type="chain" id="PRO_0000363417" description="Pentatricopeptide repeat-containing protein At4g01570">
    <location>
        <begin position="1"/>
        <end position="805"/>
    </location>
</feature>
<feature type="repeat" description="PPR 1">
    <location>
        <begin position="91"/>
        <end position="125"/>
    </location>
</feature>
<feature type="repeat" description="PPR 2">
    <location>
        <begin position="126"/>
        <end position="160"/>
    </location>
</feature>
<feature type="repeat" description="PPR 3">
    <location>
        <begin position="161"/>
        <end position="196"/>
    </location>
</feature>
<feature type="repeat" description="PPR 4">
    <location>
        <begin position="211"/>
        <end position="241"/>
    </location>
</feature>
<feature type="repeat" description="PPR 5">
    <location>
        <begin position="247"/>
        <end position="277"/>
    </location>
</feature>
<feature type="repeat" description="PPR 6">
    <location>
        <begin position="288"/>
        <end position="322"/>
    </location>
</feature>
<feature type="repeat" description="PPR 7">
    <location>
        <begin position="323"/>
        <end position="357"/>
    </location>
</feature>
<feature type="repeat" description="PPR 8">
    <location>
        <begin position="358"/>
        <end position="392"/>
    </location>
</feature>
<feature type="repeat" description="PPR 9">
    <location>
        <begin position="393"/>
        <end position="427"/>
    </location>
</feature>
<feature type="repeat" description="PPR 10">
    <location>
        <begin position="428"/>
        <end position="462"/>
    </location>
</feature>
<feature type="repeat" description="PPR 11">
    <location>
        <begin position="463"/>
        <end position="497"/>
    </location>
</feature>
<feature type="repeat" description="PPR 12">
    <location>
        <begin position="593"/>
        <end position="627"/>
    </location>
</feature>
<feature type="repeat" description="PPR 13">
    <location>
        <begin position="629"/>
        <end position="663"/>
    </location>
</feature>
<feature type="repeat" description="PPR 14">
    <location>
        <begin position="664"/>
        <end position="698"/>
    </location>
</feature>
<feature type="repeat" description="PPR 15">
    <location>
        <begin position="699"/>
        <end position="733"/>
    </location>
</feature>
<feature type="repeat" description="PPR 16">
    <location>
        <begin position="734"/>
        <end position="768"/>
    </location>
</feature>
<organism>
    <name type="scientific">Arabidopsis thaliana</name>
    <name type="common">Mouse-ear cress</name>
    <dbReference type="NCBI Taxonomy" id="3702"/>
    <lineage>
        <taxon>Eukaryota</taxon>
        <taxon>Viridiplantae</taxon>
        <taxon>Streptophyta</taxon>
        <taxon>Embryophyta</taxon>
        <taxon>Tracheophyta</taxon>
        <taxon>Spermatophyta</taxon>
        <taxon>Magnoliopsida</taxon>
        <taxon>eudicotyledons</taxon>
        <taxon>Gunneridae</taxon>
        <taxon>Pentapetalae</taxon>
        <taxon>rosids</taxon>
        <taxon>malvids</taxon>
        <taxon>Brassicales</taxon>
        <taxon>Brassicaceae</taxon>
        <taxon>Camelineae</taxon>
        <taxon>Arabidopsis</taxon>
    </lineage>
</organism>
<reference key="1">
    <citation type="journal article" date="1999" name="Nature">
        <title>Sequence and analysis of chromosome 4 of the plant Arabidopsis thaliana.</title>
        <authorList>
            <person name="Mayer K.F.X."/>
            <person name="Schueller C."/>
            <person name="Wambutt R."/>
            <person name="Murphy G."/>
            <person name="Volckaert G."/>
            <person name="Pohl T."/>
            <person name="Duesterhoeft A."/>
            <person name="Stiekema W."/>
            <person name="Entian K.-D."/>
            <person name="Terryn N."/>
            <person name="Harris B."/>
            <person name="Ansorge W."/>
            <person name="Brandt P."/>
            <person name="Grivell L.A."/>
            <person name="Rieger M."/>
            <person name="Weichselgartner M."/>
            <person name="de Simone V."/>
            <person name="Obermaier B."/>
            <person name="Mache R."/>
            <person name="Mueller M."/>
            <person name="Kreis M."/>
            <person name="Delseny M."/>
            <person name="Puigdomenech P."/>
            <person name="Watson M."/>
            <person name="Schmidtheini T."/>
            <person name="Reichert B."/>
            <person name="Portetelle D."/>
            <person name="Perez-Alonso M."/>
            <person name="Boutry M."/>
            <person name="Bancroft I."/>
            <person name="Vos P."/>
            <person name="Hoheisel J."/>
            <person name="Zimmermann W."/>
            <person name="Wedler H."/>
            <person name="Ridley P."/>
            <person name="Langham S.-A."/>
            <person name="McCullagh B."/>
            <person name="Bilham L."/>
            <person name="Robben J."/>
            <person name="van der Schueren J."/>
            <person name="Grymonprez B."/>
            <person name="Chuang Y.-J."/>
            <person name="Vandenbussche F."/>
            <person name="Braeken M."/>
            <person name="Weltjens I."/>
            <person name="Voet M."/>
            <person name="Bastiaens I."/>
            <person name="Aert R."/>
            <person name="Defoor E."/>
            <person name="Weitzenegger T."/>
            <person name="Bothe G."/>
            <person name="Ramsperger U."/>
            <person name="Hilbert H."/>
            <person name="Braun M."/>
            <person name="Holzer E."/>
            <person name="Brandt A."/>
            <person name="Peters S."/>
            <person name="van Staveren M."/>
            <person name="Dirkse W."/>
            <person name="Mooijman P."/>
            <person name="Klein Lankhorst R."/>
            <person name="Rose M."/>
            <person name="Hauf J."/>
            <person name="Koetter P."/>
            <person name="Berneiser S."/>
            <person name="Hempel S."/>
            <person name="Feldpausch M."/>
            <person name="Lamberth S."/>
            <person name="Van den Daele H."/>
            <person name="De Keyser A."/>
            <person name="Buysshaert C."/>
            <person name="Gielen J."/>
            <person name="Villarroel R."/>
            <person name="De Clercq R."/>
            <person name="van Montagu M."/>
            <person name="Rogers J."/>
            <person name="Cronin A."/>
            <person name="Quail M.A."/>
            <person name="Bray-Allen S."/>
            <person name="Clark L."/>
            <person name="Doggett J."/>
            <person name="Hall S."/>
            <person name="Kay M."/>
            <person name="Lennard N."/>
            <person name="McLay K."/>
            <person name="Mayes R."/>
            <person name="Pettett A."/>
            <person name="Rajandream M.A."/>
            <person name="Lyne M."/>
            <person name="Benes V."/>
            <person name="Rechmann S."/>
            <person name="Borkova D."/>
            <person name="Bloecker H."/>
            <person name="Scharfe M."/>
            <person name="Grimm M."/>
            <person name="Loehnert T.-H."/>
            <person name="Dose S."/>
            <person name="de Haan M."/>
            <person name="Maarse A.C."/>
            <person name="Schaefer M."/>
            <person name="Mueller-Auer S."/>
            <person name="Gabel C."/>
            <person name="Fuchs M."/>
            <person name="Fartmann B."/>
            <person name="Granderath K."/>
            <person name="Dauner D."/>
            <person name="Herzl A."/>
            <person name="Neumann S."/>
            <person name="Argiriou A."/>
            <person name="Vitale D."/>
            <person name="Liguori R."/>
            <person name="Piravandi E."/>
            <person name="Massenet O."/>
            <person name="Quigley F."/>
            <person name="Clabauld G."/>
            <person name="Muendlein A."/>
            <person name="Felber R."/>
            <person name="Schnabl S."/>
            <person name="Hiller R."/>
            <person name="Schmidt W."/>
            <person name="Lecharny A."/>
            <person name="Aubourg S."/>
            <person name="Chefdor F."/>
            <person name="Cooke R."/>
            <person name="Berger C."/>
            <person name="Monfort A."/>
            <person name="Casacuberta E."/>
            <person name="Gibbons T."/>
            <person name="Weber N."/>
            <person name="Vandenbol M."/>
            <person name="Bargues M."/>
            <person name="Terol J."/>
            <person name="Torres A."/>
            <person name="Perez-Perez A."/>
            <person name="Purnelle B."/>
            <person name="Bent E."/>
            <person name="Johnson S."/>
            <person name="Tacon D."/>
            <person name="Jesse T."/>
            <person name="Heijnen L."/>
            <person name="Schwarz S."/>
            <person name="Scholler P."/>
            <person name="Heber S."/>
            <person name="Francs P."/>
            <person name="Bielke C."/>
            <person name="Frishman D."/>
            <person name="Haase D."/>
            <person name="Lemcke K."/>
            <person name="Mewes H.-W."/>
            <person name="Stocker S."/>
            <person name="Zaccaria P."/>
            <person name="Bevan M."/>
            <person name="Wilson R.K."/>
            <person name="de la Bastide M."/>
            <person name="Habermann K."/>
            <person name="Parnell L."/>
            <person name="Dedhia N."/>
            <person name="Gnoj L."/>
            <person name="Schutz K."/>
            <person name="Huang E."/>
            <person name="Spiegel L."/>
            <person name="Sekhon M."/>
            <person name="Murray J."/>
            <person name="Sheet P."/>
            <person name="Cordes M."/>
            <person name="Abu-Threideh J."/>
            <person name="Stoneking T."/>
            <person name="Kalicki J."/>
            <person name="Graves T."/>
            <person name="Harmon G."/>
            <person name="Edwards J."/>
            <person name="Latreille P."/>
            <person name="Courtney L."/>
            <person name="Cloud J."/>
            <person name="Abbott A."/>
            <person name="Scott K."/>
            <person name="Johnson D."/>
            <person name="Minx P."/>
            <person name="Bentley D."/>
            <person name="Fulton B."/>
            <person name="Miller N."/>
            <person name="Greco T."/>
            <person name="Kemp K."/>
            <person name="Kramer J."/>
            <person name="Fulton L."/>
            <person name="Mardis E."/>
            <person name="Dante M."/>
            <person name="Pepin K."/>
            <person name="Hillier L.W."/>
            <person name="Nelson J."/>
            <person name="Spieth J."/>
            <person name="Ryan E."/>
            <person name="Andrews S."/>
            <person name="Geisel C."/>
            <person name="Layman D."/>
            <person name="Du H."/>
            <person name="Ali J."/>
            <person name="Berghoff A."/>
            <person name="Jones K."/>
            <person name="Drone K."/>
            <person name="Cotton M."/>
            <person name="Joshu C."/>
            <person name="Antonoiu B."/>
            <person name="Zidanic M."/>
            <person name="Strong C."/>
            <person name="Sun H."/>
            <person name="Lamar B."/>
            <person name="Yordan C."/>
            <person name="Ma P."/>
            <person name="Zhong J."/>
            <person name="Preston R."/>
            <person name="Vil D."/>
            <person name="Shekher M."/>
            <person name="Matero A."/>
            <person name="Shah R."/>
            <person name="Swaby I.K."/>
            <person name="O'Shaughnessy A."/>
            <person name="Rodriguez M."/>
            <person name="Hoffman J."/>
            <person name="Till S."/>
            <person name="Granat S."/>
            <person name="Shohdy N."/>
            <person name="Hasegawa A."/>
            <person name="Hameed A."/>
            <person name="Lodhi M."/>
            <person name="Johnson A."/>
            <person name="Chen E."/>
            <person name="Marra M.A."/>
            <person name="Martienssen R."/>
            <person name="McCombie W.R."/>
        </authorList>
    </citation>
    <scope>NUCLEOTIDE SEQUENCE [LARGE SCALE GENOMIC DNA]</scope>
    <source>
        <strain>cv. Columbia</strain>
    </source>
</reference>
<reference key="2">
    <citation type="journal article" date="2017" name="Plant J.">
        <title>Araport11: a complete reannotation of the Arabidopsis thaliana reference genome.</title>
        <authorList>
            <person name="Cheng C.Y."/>
            <person name="Krishnakumar V."/>
            <person name="Chan A.P."/>
            <person name="Thibaud-Nissen F."/>
            <person name="Schobel S."/>
            <person name="Town C.D."/>
        </authorList>
    </citation>
    <scope>GENOME REANNOTATION</scope>
    <source>
        <strain>cv. Columbia</strain>
    </source>
</reference>
<reference key="3">
    <citation type="journal article" date="2003" name="Science">
        <title>Empirical analysis of transcriptional activity in the Arabidopsis genome.</title>
        <authorList>
            <person name="Yamada K."/>
            <person name="Lim J."/>
            <person name="Dale J.M."/>
            <person name="Chen H."/>
            <person name="Shinn P."/>
            <person name="Palm C.J."/>
            <person name="Southwick A.M."/>
            <person name="Wu H.C."/>
            <person name="Kim C.J."/>
            <person name="Nguyen M."/>
            <person name="Pham P.K."/>
            <person name="Cheuk R.F."/>
            <person name="Karlin-Newmann G."/>
            <person name="Liu S.X."/>
            <person name="Lam B."/>
            <person name="Sakano H."/>
            <person name="Wu T."/>
            <person name="Yu G."/>
            <person name="Miranda M."/>
            <person name="Quach H.L."/>
            <person name="Tripp M."/>
            <person name="Chang C.H."/>
            <person name="Lee J.M."/>
            <person name="Toriumi M.J."/>
            <person name="Chan M.M."/>
            <person name="Tang C.C."/>
            <person name="Onodera C.S."/>
            <person name="Deng J.M."/>
            <person name="Akiyama K."/>
            <person name="Ansari Y."/>
            <person name="Arakawa T."/>
            <person name="Banh J."/>
            <person name="Banno F."/>
            <person name="Bowser L."/>
            <person name="Brooks S.Y."/>
            <person name="Carninci P."/>
            <person name="Chao Q."/>
            <person name="Choy N."/>
            <person name="Enju A."/>
            <person name="Goldsmith A.D."/>
            <person name="Gurjal M."/>
            <person name="Hansen N.F."/>
            <person name="Hayashizaki Y."/>
            <person name="Johnson-Hopson C."/>
            <person name="Hsuan V.W."/>
            <person name="Iida K."/>
            <person name="Karnes M."/>
            <person name="Khan S."/>
            <person name="Koesema E."/>
            <person name="Ishida J."/>
            <person name="Jiang P.X."/>
            <person name="Jones T."/>
            <person name="Kawai J."/>
            <person name="Kamiya A."/>
            <person name="Meyers C."/>
            <person name="Nakajima M."/>
            <person name="Narusaka M."/>
            <person name="Seki M."/>
            <person name="Sakurai T."/>
            <person name="Satou M."/>
            <person name="Tamse R."/>
            <person name="Vaysberg M."/>
            <person name="Wallender E.K."/>
            <person name="Wong C."/>
            <person name="Yamamura Y."/>
            <person name="Yuan S."/>
            <person name="Shinozaki K."/>
            <person name="Davis R.W."/>
            <person name="Theologis A."/>
            <person name="Ecker J.R."/>
        </authorList>
    </citation>
    <scope>NUCLEOTIDE SEQUENCE [LARGE SCALE MRNA]</scope>
    <source>
        <strain>cv. Columbia</strain>
    </source>
</reference>
<reference key="4">
    <citation type="journal article" date="2004" name="Plant Cell">
        <title>Genome-wide analysis of Arabidopsis pentatricopeptide repeat proteins reveals their essential role in organelle biogenesis.</title>
        <authorList>
            <person name="Lurin C."/>
            <person name="Andres C."/>
            <person name="Aubourg S."/>
            <person name="Bellaoui M."/>
            <person name="Bitton F."/>
            <person name="Bruyere C."/>
            <person name="Caboche M."/>
            <person name="Debast C."/>
            <person name="Gualberto J."/>
            <person name="Hoffmann B."/>
            <person name="Lecharny A."/>
            <person name="Le Ret M."/>
            <person name="Martin-Magniette M.-L."/>
            <person name="Mireau H."/>
            <person name="Peeters N."/>
            <person name="Renou J.-P."/>
            <person name="Szurek B."/>
            <person name="Taconnat L."/>
            <person name="Small I."/>
        </authorList>
    </citation>
    <scope>GENE FAMILY</scope>
</reference>
<comment type="similarity">
    <text evidence="1">Belongs to the PPR family. P subfamily.</text>
</comment>
<comment type="sequence caution" evidence="1">
    <conflict type="erroneous gene model prediction">
        <sequence resource="EMBL-CDS" id="AAC62783"/>
    </conflict>
</comment>
<comment type="sequence caution" evidence="1">
    <conflict type="erroneous gene model prediction">
        <sequence resource="EMBL-CDS" id="CAB77727"/>
    </conflict>
</comment>
<comment type="online information" name="Pentatricopeptide repeat proteins">
    <link uri="https://ppr.plantenergy.uwa.edu.au"/>
</comment>
<evidence type="ECO:0000305" key="1"/>
<keyword id="KW-1185">Reference proteome</keyword>
<keyword id="KW-0677">Repeat</keyword>
<protein>
    <recommendedName>
        <fullName>Pentatricopeptide repeat-containing protein At4g01570</fullName>
    </recommendedName>
</protein>
<proteinExistence type="evidence at transcript level"/>
<dbReference type="EMBL" id="AF096370">
    <property type="protein sequence ID" value="AAC62783.1"/>
    <property type="status" value="ALT_SEQ"/>
    <property type="molecule type" value="Genomic_DNA"/>
</dbReference>
<dbReference type="EMBL" id="AF104919">
    <property type="status" value="NOT_ANNOTATED_CDS"/>
    <property type="molecule type" value="Genomic_DNA"/>
</dbReference>
<dbReference type="EMBL" id="AL161492">
    <property type="protein sequence ID" value="CAB77727.1"/>
    <property type="status" value="ALT_SEQ"/>
    <property type="molecule type" value="Genomic_DNA"/>
</dbReference>
<dbReference type="EMBL" id="CP002687">
    <property type="protein sequence ID" value="AEE82043.1"/>
    <property type="molecule type" value="Genomic_DNA"/>
</dbReference>
<dbReference type="EMBL" id="AY065015">
    <property type="protein sequence ID" value="AAL57659.1"/>
    <property type="molecule type" value="mRNA"/>
</dbReference>
<dbReference type="EMBL" id="BT001133">
    <property type="protein sequence ID" value="AAN64524.1"/>
    <property type="molecule type" value="mRNA"/>
</dbReference>
<dbReference type="PIR" id="D85020">
    <property type="entry name" value="D85020"/>
</dbReference>
<dbReference type="PIR" id="T01937">
    <property type="entry name" value="T01937"/>
</dbReference>
<dbReference type="RefSeq" id="NP_192066.2">
    <property type="nucleotide sequence ID" value="NM_116387.2"/>
</dbReference>
<dbReference type="SMR" id="Q8VZE4"/>
<dbReference type="FunCoup" id="Q8VZE4">
    <property type="interactions" value="1514"/>
</dbReference>
<dbReference type="STRING" id="3702.Q8VZE4"/>
<dbReference type="PaxDb" id="3702-AT4G01570.1"/>
<dbReference type="ProteomicsDB" id="249206"/>
<dbReference type="EnsemblPlants" id="AT4G01570.1">
    <property type="protein sequence ID" value="AT4G01570.1"/>
    <property type="gene ID" value="AT4G01570"/>
</dbReference>
<dbReference type="GeneID" id="828133"/>
<dbReference type="Gramene" id="AT4G01570.1">
    <property type="protein sequence ID" value="AT4G01570.1"/>
    <property type="gene ID" value="AT4G01570"/>
</dbReference>
<dbReference type="KEGG" id="ath:AT4G01570"/>
<dbReference type="Araport" id="AT4G01570"/>
<dbReference type="TAIR" id="AT4G01570"/>
<dbReference type="eggNOG" id="KOG4197">
    <property type="taxonomic scope" value="Eukaryota"/>
</dbReference>
<dbReference type="HOGENOM" id="CLU_002706_49_8_1"/>
<dbReference type="InParanoid" id="Q8VZE4"/>
<dbReference type="OMA" id="FLRMMLD"/>
<dbReference type="PhylomeDB" id="Q8VZE4"/>
<dbReference type="PRO" id="PR:Q8VZE4"/>
<dbReference type="Proteomes" id="UP000006548">
    <property type="component" value="Chromosome 4"/>
</dbReference>
<dbReference type="ExpressionAtlas" id="Q8VZE4">
    <property type="expression patterns" value="baseline and differential"/>
</dbReference>
<dbReference type="Gene3D" id="1.25.40.10">
    <property type="entry name" value="Tetratricopeptide repeat domain"/>
    <property type="match status" value="5"/>
</dbReference>
<dbReference type="InterPro" id="IPR002885">
    <property type="entry name" value="Pentatricopeptide_rpt"/>
</dbReference>
<dbReference type="InterPro" id="IPR011990">
    <property type="entry name" value="TPR-like_helical_dom_sf"/>
</dbReference>
<dbReference type="NCBIfam" id="TIGR00756">
    <property type="entry name" value="PPR"/>
    <property type="match status" value="10"/>
</dbReference>
<dbReference type="PANTHER" id="PTHR47941">
    <property type="entry name" value="PENTATRICOPEPTIDE REPEAT-CONTAINING PROTEIN 3, MITOCHONDRIAL"/>
    <property type="match status" value="1"/>
</dbReference>
<dbReference type="Pfam" id="PF01535">
    <property type="entry name" value="PPR"/>
    <property type="match status" value="2"/>
</dbReference>
<dbReference type="Pfam" id="PF13041">
    <property type="entry name" value="PPR_2"/>
    <property type="match status" value="4"/>
</dbReference>
<dbReference type="Pfam" id="PF13812">
    <property type="entry name" value="PPR_3"/>
    <property type="match status" value="1"/>
</dbReference>
<dbReference type="PROSITE" id="PS51375">
    <property type="entry name" value="PPR"/>
    <property type="match status" value="15"/>
</dbReference>
<gene>
    <name type="ordered locus">At4g01570</name>
    <name type="ORF">F11O4.7</name>
    <name type="ORF">T15B16.21</name>
</gene>
<sequence>MRHGRGSAVSAAISGLSPAKNSPFPQLCNVLLVASLSKTLSQSGTRSLDANSIPISEPVVLQILRRNSIDPSKKLDFFRWCYSLRPGYKHSATAYSQIFRTVCRTGLLGEVPDLLGSMKEDGVNLDQTMAKILLDSLIRSGKFESALGVLDYMEELGDCLNPSVYDSVLIALVKKHELRLALSILFKLLEASDNHSDDDTGRVIIVSYLPGTVAVNELLVGLRRADMRSEFKRVFEKLKGMKRFKFDTWSYNICIHGFGCWGDLDAALSLFKEMKERSSVYGSSFGPDICTYNSLIHVLCLFGKAKDALIVWDELKVSGHEPDNSTYRILIQGCCKSYRMDDAMRIYGEMQYNGFVPDTIVYNCLLDGTLKARKVTEACQLFEKMVQEGVRASCWTYNILIDGLFRNGRAEAGFTLFCDLKKKGQFVDAITFSIVGLQLCREGKLEGAVKLVEEMETRGFSVDLVTISSLLIGFHKQGRWDWKEKLMKHIREGNLVPNVLRWNAGVEASLKRPQSKDKDYTPMFPSKGSFLDIMSMVGSEDDGASAEEVSPMEDDPWSSSPYMDQLAHQRNQPKPLFGLARGQRVEAKPDSFDVDMMNTFLSIYLSKGDLSLACKLFEIFNGMGVTDLTSYTYNSMMSSFVKKGYFQTARGVLDQMFENFCAADIATYNVIIQGLGKMGRADLASAVLDRLTKQGGYLDIVMYNTLINALGKATRLDEATQLFDHMKSNGINPDVVSYNTMIEVNSKAGKLKEAYKYLKAMLDAGCLPNHVTDTILDYLGKEMEKARFKKASFVRNKPNNNNISS</sequence>
<name>PP299_ARATH</name>
<accession>Q8VZE4</accession>
<accession>O82588</accession>
<accession>Q9M124</accession>